<sequence>MAAESSFDIVSKIDRQEVDNAVNQASRELSQRFDFKGTGSTISWAGEHAVEIKSNSEERAKAALDVFKSKLVKRGVSLKILDVPETPKVSGKEYRLPITLKEGISPENAKKIAKMIREEFPKGVKAQIQGDELRVSSKKKDDLQAVIAMLKNSDLDVALQFVNFR</sequence>
<feature type="chain" id="PRO_0000261983" description="Nucleotide-binding protein Tfu_2672">
    <location>
        <begin position="1"/>
        <end position="165"/>
    </location>
</feature>
<accession>Q47LG7</accession>
<reference key="1">
    <citation type="journal article" date="2007" name="J. Bacteriol.">
        <title>Genome sequence and analysis of the soil cellulolytic actinomycete Thermobifida fusca YX.</title>
        <authorList>
            <person name="Lykidis A."/>
            <person name="Mavromatis K."/>
            <person name="Ivanova N."/>
            <person name="Anderson I."/>
            <person name="Land M."/>
            <person name="DiBartolo G."/>
            <person name="Martinez M."/>
            <person name="Lapidus A."/>
            <person name="Lucas S."/>
            <person name="Copeland A."/>
            <person name="Richardson P."/>
            <person name="Wilson D.B."/>
            <person name="Kyrpides N."/>
        </authorList>
    </citation>
    <scope>NUCLEOTIDE SEQUENCE [LARGE SCALE GENOMIC DNA]</scope>
    <source>
        <strain>YX</strain>
    </source>
</reference>
<gene>
    <name type="ordered locus">Tfu_2672</name>
</gene>
<organism>
    <name type="scientific">Thermobifida fusca (strain YX)</name>
    <dbReference type="NCBI Taxonomy" id="269800"/>
    <lineage>
        <taxon>Bacteria</taxon>
        <taxon>Bacillati</taxon>
        <taxon>Actinomycetota</taxon>
        <taxon>Actinomycetes</taxon>
        <taxon>Streptosporangiales</taxon>
        <taxon>Nocardiopsidaceae</taxon>
        <taxon>Thermobifida</taxon>
    </lineage>
</organism>
<protein>
    <recommendedName>
        <fullName evidence="1">Nucleotide-binding protein Tfu_2672</fullName>
    </recommendedName>
</protein>
<name>Y2672_THEFY</name>
<evidence type="ECO:0000255" key="1">
    <source>
        <dbReference type="HAMAP-Rule" id="MF_00632"/>
    </source>
</evidence>
<dbReference type="EMBL" id="CP000088">
    <property type="protein sequence ID" value="AAZ56705.1"/>
    <property type="molecule type" value="Genomic_DNA"/>
</dbReference>
<dbReference type="RefSeq" id="WP_011293095.1">
    <property type="nucleotide sequence ID" value="NC_007333.1"/>
</dbReference>
<dbReference type="SMR" id="Q47LG7"/>
<dbReference type="KEGG" id="tfu:Tfu_2672"/>
<dbReference type="eggNOG" id="COG1666">
    <property type="taxonomic scope" value="Bacteria"/>
</dbReference>
<dbReference type="HOGENOM" id="CLU_099839_0_0_11"/>
<dbReference type="OrthoDB" id="9801447at2"/>
<dbReference type="GO" id="GO:0005829">
    <property type="term" value="C:cytosol"/>
    <property type="evidence" value="ECO:0007669"/>
    <property type="project" value="TreeGrafter"/>
</dbReference>
<dbReference type="GO" id="GO:0000166">
    <property type="term" value="F:nucleotide binding"/>
    <property type="evidence" value="ECO:0007669"/>
    <property type="project" value="TreeGrafter"/>
</dbReference>
<dbReference type="CDD" id="cd11740">
    <property type="entry name" value="YajQ_like"/>
    <property type="match status" value="1"/>
</dbReference>
<dbReference type="FunFam" id="3.30.70.860:FF:000004">
    <property type="entry name" value="UPF0234 protein AWC22_11905"/>
    <property type="match status" value="1"/>
</dbReference>
<dbReference type="Gene3D" id="3.30.70.860">
    <property type="match status" value="1"/>
</dbReference>
<dbReference type="Gene3D" id="3.30.70.990">
    <property type="entry name" value="YajQ-like, domain 2"/>
    <property type="match status" value="1"/>
</dbReference>
<dbReference type="HAMAP" id="MF_00632">
    <property type="entry name" value="YajQ"/>
    <property type="match status" value="1"/>
</dbReference>
<dbReference type="InterPro" id="IPR007551">
    <property type="entry name" value="DUF520"/>
</dbReference>
<dbReference type="InterPro" id="IPR035571">
    <property type="entry name" value="UPF0234-like_C"/>
</dbReference>
<dbReference type="InterPro" id="IPR035570">
    <property type="entry name" value="UPF0234_N"/>
</dbReference>
<dbReference type="InterPro" id="IPR036183">
    <property type="entry name" value="YajQ-like_sf"/>
</dbReference>
<dbReference type="NCBIfam" id="NF003819">
    <property type="entry name" value="PRK05412.1"/>
    <property type="match status" value="1"/>
</dbReference>
<dbReference type="PANTHER" id="PTHR30476">
    <property type="entry name" value="UPF0234 PROTEIN YAJQ"/>
    <property type="match status" value="1"/>
</dbReference>
<dbReference type="PANTHER" id="PTHR30476:SF0">
    <property type="entry name" value="UPF0234 PROTEIN YAJQ"/>
    <property type="match status" value="1"/>
</dbReference>
<dbReference type="Pfam" id="PF04461">
    <property type="entry name" value="DUF520"/>
    <property type="match status" value="1"/>
</dbReference>
<dbReference type="SUPFAM" id="SSF89963">
    <property type="entry name" value="YajQ-like"/>
    <property type="match status" value="2"/>
</dbReference>
<proteinExistence type="inferred from homology"/>
<keyword id="KW-0547">Nucleotide-binding</keyword>
<comment type="function">
    <text evidence="1">Nucleotide-binding protein.</text>
</comment>
<comment type="similarity">
    <text evidence="1">Belongs to the YajQ family.</text>
</comment>